<proteinExistence type="inferred from homology"/>
<name>Y4SH_SINFN</name>
<reference key="1">
    <citation type="journal article" date="1997" name="Nature">
        <title>Molecular basis of symbiosis between Rhizobium and legumes.</title>
        <authorList>
            <person name="Freiberg C.A."/>
            <person name="Fellay R."/>
            <person name="Bairoch A."/>
            <person name="Broughton W.J."/>
            <person name="Rosenthal A."/>
            <person name="Perret X."/>
        </authorList>
    </citation>
    <scope>NUCLEOTIDE SEQUENCE [LARGE SCALE GENOMIC DNA]</scope>
    <source>
        <strain>NBRC 101917 / NGR234</strain>
    </source>
</reference>
<reference key="2">
    <citation type="journal article" date="2009" name="Appl. Environ. Microbiol.">
        <title>Rhizobium sp. strain NGR234 possesses a remarkable number of secretion systems.</title>
        <authorList>
            <person name="Schmeisser C."/>
            <person name="Liesegang H."/>
            <person name="Krysciak D."/>
            <person name="Bakkou N."/>
            <person name="Le Quere A."/>
            <person name="Wollherr A."/>
            <person name="Heinemeyer I."/>
            <person name="Morgenstern B."/>
            <person name="Pommerening-Roeser A."/>
            <person name="Flores M."/>
            <person name="Palacios R."/>
            <person name="Brenner S."/>
            <person name="Gottschalk G."/>
            <person name="Schmitz R.A."/>
            <person name="Broughton W.J."/>
            <person name="Perret X."/>
            <person name="Strittmatter A.W."/>
            <person name="Streit W.R."/>
        </authorList>
    </citation>
    <scope>NUCLEOTIDE SEQUENCE [LARGE SCALE GENOMIC DNA]</scope>
    <source>
        <strain>NBRC 101917 / NGR234</strain>
    </source>
</reference>
<accession>P55651</accession>
<sequence>MEKCSHESGRHSAENDGKYDITGSTATNVVDGFTMVAVGDVIVSRTLANGHHPGFSEIVELLRAADVTFGNMETLIFDIRSFNGTPQAEYGGAYHVSLPEIGPDLKAMGFNIMGRANNHSLDWGVEGMRETSRILDESGIIHAGVGESRAQASAARLLETARGRVALLSCATSFTPMSRACDPAGEAPARPGVNALRLERSVVVEPDMLESLRKIRDALPNPGPKHDDREMLVLAGTTYRTGKDVGYTYAANTRDLADILRNVRRGKQYSDFCIFTNHAHEPGNWSEEPADFEQALARKLIDAGADAYVGHGPHRLRGIEIYKRRPIFYSLGNFFYDDLRTPVGADMYDVYDKDPQVDTDAEVTAAEETMGYPTAAGFIGALAEPVYYESVVAVSRFEENQLAELRLYPIELGYSKRLANRGVPSLAPRPQAISILERLQRLSEPFGTRITIEDRVGLIRL</sequence>
<comment type="function">
    <text>Could be involved in the biosynthesis of a cell wall component.</text>
</comment>
<comment type="similarity">
    <text evidence="2">Belongs to the CapA family.</text>
</comment>
<feature type="chain" id="PRO_0000200947" description="Uncharacterized protein y4sH">
    <location>
        <begin position="1"/>
        <end position="461"/>
    </location>
</feature>
<feature type="region of interest" description="Disordered" evidence="1">
    <location>
        <begin position="1"/>
        <end position="21"/>
    </location>
</feature>
<feature type="compositionally biased region" description="Basic and acidic residues" evidence="1">
    <location>
        <begin position="1"/>
        <end position="19"/>
    </location>
</feature>
<evidence type="ECO:0000256" key="1">
    <source>
        <dbReference type="SAM" id="MobiDB-lite"/>
    </source>
</evidence>
<evidence type="ECO:0000305" key="2"/>
<gene>
    <name type="ordered locus">NGR_a01650</name>
    <name type="ORF">y4sH</name>
</gene>
<protein>
    <recommendedName>
        <fullName>Uncharacterized protein y4sH</fullName>
    </recommendedName>
</protein>
<geneLocation type="plasmid">
    <name>sym pNGR234a</name>
</geneLocation>
<keyword id="KW-0614">Plasmid</keyword>
<keyword id="KW-1185">Reference proteome</keyword>
<dbReference type="EMBL" id="U00090">
    <property type="protein sequence ID" value="AAB91847.1"/>
    <property type="molecule type" value="Genomic_DNA"/>
</dbReference>
<dbReference type="RefSeq" id="NP_444060.1">
    <property type="nucleotide sequence ID" value="NC_000914.2"/>
</dbReference>
<dbReference type="RefSeq" id="WP_010875201.1">
    <property type="nucleotide sequence ID" value="NC_000914.2"/>
</dbReference>
<dbReference type="SMR" id="P55651"/>
<dbReference type="KEGG" id="rhi:NGR_a01650"/>
<dbReference type="PATRIC" id="fig|394.7.peg.158"/>
<dbReference type="eggNOG" id="COG2843">
    <property type="taxonomic scope" value="Bacteria"/>
</dbReference>
<dbReference type="HOGENOM" id="CLU_038823_2_0_5"/>
<dbReference type="OrthoDB" id="9810718at2"/>
<dbReference type="Proteomes" id="UP000001054">
    <property type="component" value="Plasmid pNGR234a"/>
</dbReference>
<dbReference type="CDD" id="cd07381">
    <property type="entry name" value="MPP_CapA"/>
    <property type="match status" value="1"/>
</dbReference>
<dbReference type="InterPro" id="IPR019079">
    <property type="entry name" value="Capsule_synth_CapA"/>
</dbReference>
<dbReference type="InterPro" id="IPR052169">
    <property type="entry name" value="CW_Biosynth-Accessory"/>
</dbReference>
<dbReference type="InterPro" id="IPR029052">
    <property type="entry name" value="Metallo-depent_PP-like"/>
</dbReference>
<dbReference type="PANTHER" id="PTHR33393">
    <property type="entry name" value="POLYGLUTAMINE SYNTHESIS ACCESSORY PROTEIN RV0574C-RELATED"/>
    <property type="match status" value="1"/>
</dbReference>
<dbReference type="PANTHER" id="PTHR33393:SF11">
    <property type="entry name" value="POLYGLUTAMINE SYNTHESIS ACCESSORY PROTEIN RV0574C-RELATED"/>
    <property type="match status" value="1"/>
</dbReference>
<dbReference type="Pfam" id="PF09587">
    <property type="entry name" value="PGA_cap"/>
    <property type="match status" value="1"/>
</dbReference>
<dbReference type="SMART" id="SM00854">
    <property type="entry name" value="PGA_cap"/>
    <property type="match status" value="1"/>
</dbReference>
<dbReference type="SUPFAM" id="SSF56300">
    <property type="entry name" value="Metallo-dependent phosphatases"/>
    <property type="match status" value="1"/>
</dbReference>
<organism>
    <name type="scientific">Sinorhizobium fredii (strain NBRC 101917 / NGR234)</name>
    <dbReference type="NCBI Taxonomy" id="394"/>
    <lineage>
        <taxon>Bacteria</taxon>
        <taxon>Pseudomonadati</taxon>
        <taxon>Pseudomonadota</taxon>
        <taxon>Alphaproteobacteria</taxon>
        <taxon>Hyphomicrobiales</taxon>
        <taxon>Rhizobiaceae</taxon>
        <taxon>Sinorhizobium/Ensifer group</taxon>
        <taxon>Sinorhizobium</taxon>
    </lineage>
</organism>